<accession>B7M0C2</accession>
<feature type="chain" id="PRO_1000189159" description="Isoleucine--tRNA ligase">
    <location>
        <begin position="1"/>
        <end position="938"/>
    </location>
</feature>
<feature type="short sequence motif" description="'HIGH' region">
    <location>
        <begin position="58"/>
        <end position="68"/>
    </location>
</feature>
<feature type="short sequence motif" description="'KMSKS' region">
    <location>
        <begin position="602"/>
        <end position="606"/>
    </location>
</feature>
<feature type="binding site" evidence="1">
    <location>
        <position position="561"/>
    </location>
    <ligand>
        <name>L-isoleucyl-5'-AMP</name>
        <dbReference type="ChEBI" id="CHEBI:178002"/>
    </ligand>
</feature>
<feature type="binding site" evidence="1">
    <location>
        <position position="605"/>
    </location>
    <ligand>
        <name>ATP</name>
        <dbReference type="ChEBI" id="CHEBI:30616"/>
    </ligand>
</feature>
<feature type="binding site" evidence="1">
    <location>
        <position position="901"/>
    </location>
    <ligand>
        <name>Zn(2+)</name>
        <dbReference type="ChEBI" id="CHEBI:29105"/>
    </ligand>
</feature>
<feature type="binding site" evidence="1">
    <location>
        <position position="904"/>
    </location>
    <ligand>
        <name>Zn(2+)</name>
        <dbReference type="ChEBI" id="CHEBI:29105"/>
    </ligand>
</feature>
<feature type="binding site" evidence="1">
    <location>
        <position position="921"/>
    </location>
    <ligand>
        <name>Zn(2+)</name>
        <dbReference type="ChEBI" id="CHEBI:29105"/>
    </ligand>
</feature>
<feature type="binding site" evidence="1">
    <location>
        <position position="924"/>
    </location>
    <ligand>
        <name>Zn(2+)</name>
        <dbReference type="ChEBI" id="CHEBI:29105"/>
    </ligand>
</feature>
<feature type="modified residue" description="N6-acetyllysine" evidence="1">
    <location>
        <position position="183"/>
    </location>
</feature>
<sequence>MSDYKSTLNLPETGFPMRGDLAKREPGMLARWTDDDLYGIIRAAKKGKKTFILHDGPPYANGSIHIGHSVNKILKDIIVKSKGLSGYDSPYVPGWDCHGLPIELKVEQEYGKPGEKFTAAEFRAKCREYAATQVDGQRKDFIRLGVLGDWSHPYLTMDFKTEANIIRALGKIIGNGHLHKGAKPVHWCVDCRSALAEAEVEYYDKTSPSIDVAFQAVDQDALKAKFAVSNVNGPISLVIWTTTPWTLPANRAISIAPDFDYALVQIDGQAVILAKDLVESVMQRIGVTDYTILGTVKGAELELLRFTHPFMGFDVPAILGDHVTLDAGTGAVHTAPGHGPDDYVIGQKYGLETANPVGPDGTYLPGTYPTLDGVNVFKANDIVVALLQEKGALLHVEKMQHSYPCCWRHKTPIIFRATPQWFVSMDQKGLRAQSLKEIKGVQWIPDWGQARIESMVANRPDWCISRQRTWGVPMSLFVHKDTEELHPRTLELMEEVAKRVEVDGIQAWWDLDAKEILGDEADQYVKVPDTLDVWFDSGSTHSSVVDVRPEFAGHAADMYLEGSDQHRGWFMSSLMISTAMKGKAPYRQVLTHGFTVDGQGRKMSKSIGNTVSPQDVMNKLGADILRLWVASTDYTGEMAVSDEILKRAADSYRRIRNTARFLLANLNGFDPAKDMVKPEEMVVLDRWAVGCAKAAQEDILKAYEAYDFHEVVQRLMRFCSVEMGSFYLDIIKDRQYTAKADSVARRSCQTALYHIAEALVRWMAPILSFTADEVWGYLPGEREKYVFTGEWYEGLFGLADSEAMNDAFWDELLKVRGEVNKVIEQARADKKVGGSLEAAVTLYAEPELSAKLTALGDELRFVLLTSGATVADYNDAPADAQQSEVLKGLKVALSKAEGEKCPRCWHYTQDVGKVAEHAEICGRCVSNVAGDGEKRKFA</sequence>
<keyword id="KW-0007">Acetylation</keyword>
<keyword id="KW-0030">Aminoacyl-tRNA synthetase</keyword>
<keyword id="KW-0067">ATP-binding</keyword>
<keyword id="KW-0963">Cytoplasm</keyword>
<keyword id="KW-0436">Ligase</keyword>
<keyword id="KW-0479">Metal-binding</keyword>
<keyword id="KW-0547">Nucleotide-binding</keyword>
<keyword id="KW-0648">Protein biosynthesis</keyword>
<keyword id="KW-0862">Zinc</keyword>
<reference key="1">
    <citation type="journal article" date="2009" name="PLoS Genet.">
        <title>Organised genome dynamics in the Escherichia coli species results in highly diverse adaptive paths.</title>
        <authorList>
            <person name="Touchon M."/>
            <person name="Hoede C."/>
            <person name="Tenaillon O."/>
            <person name="Barbe V."/>
            <person name="Baeriswyl S."/>
            <person name="Bidet P."/>
            <person name="Bingen E."/>
            <person name="Bonacorsi S."/>
            <person name="Bouchier C."/>
            <person name="Bouvet O."/>
            <person name="Calteau A."/>
            <person name="Chiapello H."/>
            <person name="Clermont O."/>
            <person name="Cruveiller S."/>
            <person name="Danchin A."/>
            <person name="Diard M."/>
            <person name="Dossat C."/>
            <person name="Karoui M.E."/>
            <person name="Frapy E."/>
            <person name="Garry L."/>
            <person name="Ghigo J.M."/>
            <person name="Gilles A.M."/>
            <person name="Johnson J."/>
            <person name="Le Bouguenec C."/>
            <person name="Lescat M."/>
            <person name="Mangenot S."/>
            <person name="Martinez-Jehanne V."/>
            <person name="Matic I."/>
            <person name="Nassif X."/>
            <person name="Oztas S."/>
            <person name="Petit M.A."/>
            <person name="Pichon C."/>
            <person name="Rouy Z."/>
            <person name="Ruf C.S."/>
            <person name="Schneider D."/>
            <person name="Tourret J."/>
            <person name="Vacherie B."/>
            <person name="Vallenet D."/>
            <person name="Medigue C."/>
            <person name="Rocha E.P.C."/>
            <person name="Denamur E."/>
        </authorList>
    </citation>
    <scope>NUCLEOTIDE SEQUENCE [LARGE SCALE GENOMIC DNA]</scope>
    <source>
        <strain>IAI1</strain>
    </source>
</reference>
<protein>
    <recommendedName>
        <fullName evidence="1">Isoleucine--tRNA ligase</fullName>
        <ecNumber evidence="1">6.1.1.5</ecNumber>
    </recommendedName>
    <alternativeName>
        <fullName evidence="1">Isoleucyl-tRNA synthetase</fullName>
        <shortName evidence="1">IleRS</shortName>
    </alternativeName>
</protein>
<evidence type="ECO:0000255" key="1">
    <source>
        <dbReference type="HAMAP-Rule" id="MF_02002"/>
    </source>
</evidence>
<gene>
    <name evidence="1" type="primary">ileS</name>
    <name type="ordered locus">ECIAI1_0027</name>
</gene>
<name>SYI_ECO8A</name>
<comment type="function">
    <text evidence="1">Catalyzes the attachment of isoleucine to tRNA(Ile). As IleRS can inadvertently accommodate and process structurally similar amino acids such as valine, to avoid such errors it has two additional distinct tRNA(Ile)-dependent editing activities. One activity is designated as 'pretransfer' editing and involves the hydrolysis of activated Val-AMP. The other activity is designated 'posttransfer' editing and involves deacylation of mischarged Val-tRNA(Ile).</text>
</comment>
<comment type="catalytic activity">
    <reaction evidence="1">
        <text>tRNA(Ile) + L-isoleucine + ATP = L-isoleucyl-tRNA(Ile) + AMP + diphosphate</text>
        <dbReference type="Rhea" id="RHEA:11060"/>
        <dbReference type="Rhea" id="RHEA-COMP:9666"/>
        <dbReference type="Rhea" id="RHEA-COMP:9695"/>
        <dbReference type="ChEBI" id="CHEBI:30616"/>
        <dbReference type="ChEBI" id="CHEBI:33019"/>
        <dbReference type="ChEBI" id="CHEBI:58045"/>
        <dbReference type="ChEBI" id="CHEBI:78442"/>
        <dbReference type="ChEBI" id="CHEBI:78528"/>
        <dbReference type="ChEBI" id="CHEBI:456215"/>
        <dbReference type="EC" id="6.1.1.5"/>
    </reaction>
</comment>
<comment type="cofactor">
    <cofactor evidence="1">
        <name>Zn(2+)</name>
        <dbReference type="ChEBI" id="CHEBI:29105"/>
    </cofactor>
    <text evidence="1">Binds 1 zinc ion per subunit.</text>
</comment>
<comment type="subunit">
    <text evidence="1">Monomer.</text>
</comment>
<comment type="subcellular location">
    <subcellularLocation>
        <location evidence="1">Cytoplasm</location>
    </subcellularLocation>
</comment>
<comment type="domain">
    <text evidence="1">IleRS has two distinct active sites: one for aminoacylation and one for editing. The misactivated valine is translocated from the active site to the editing site, which sterically excludes the correctly activated isoleucine. The single editing site contains two valyl binding pockets, one specific for each substrate (Val-AMP or Val-tRNA(Ile)).</text>
</comment>
<comment type="similarity">
    <text evidence="1">Belongs to the class-I aminoacyl-tRNA synthetase family. IleS type 1 subfamily.</text>
</comment>
<organism>
    <name type="scientific">Escherichia coli O8 (strain IAI1)</name>
    <dbReference type="NCBI Taxonomy" id="585034"/>
    <lineage>
        <taxon>Bacteria</taxon>
        <taxon>Pseudomonadati</taxon>
        <taxon>Pseudomonadota</taxon>
        <taxon>Gammaproteobacteria</taxon>
        <taxon>Enterobacterales</taxon>
        <taxon>Enterobacteriaceae</taxon>
        <taxon>Escherichia</taxon>
    </lineage>
</organism>
<dbReference type="EC" id="6.1.1.5" evidence="1"/>
<dbReference type="EMBL" id="CU928160">
    <property type="protein sequence ID" value="CAQ96917.1"/>
    <property type="molecule type" value="Genomic_DNA"/>
</dbReference>
<dbReference type="RefSeq" id="WP_001286857.1">
    <property type="nucleotide sequence ID" value="NC_011741.1"/>
</dbReference>
<dbReference type="SMR" id="B7M0C2"/>
<dbReference type="GeneID" id="93777410"/>
<dbReference type="KEGG" id="ecr:ECIAI1_0027"/>
<dbReference type="HOGENOM" id="CLU_001493_7_1_6"/>
<dbReference type="GO" id="GO:0005829">
    <property type="term" value="C:cytosol"/>
    <property type="evidence" value="ECO:0007669"/>
    <property type="project" value="TreeGrafter"/>
</dbReference>
<dbReference type="GO" id="GO:0002161">
    <property type="term" value="F:aminoacyl-tRNA deacylase activity"/>
    <property type="evidence" value="ECO:0007669"/>
    <property type="project" value="InterPro"/>
</dbReference>
<dbReference type="GO" id="GO:0005524">
    <property type="term" value="F:ATP binding"/>
    <property type="evidence" value="ECO:0007669"/>
    <property type="project" value="UniProtKB-UniRule"/>
</dbReference>
<dbReference type="GO" id="GO:0004822">
    <property type="term" value="F:isoleucine-tRNA ligase activity"/>
    <property type="evidence" value="ECO:0007669"/>
    <property type="project" value="UniProtKB-UniRule"/>
</dbReference>
<dbReference type="GO" id="GO:0000049">
    <property type="term" value="F:tRNA binding"/>
    <property type="evidence" value="ECO:0007669"/>
    <property type="project" value="InterPro"/>
</dbReference>
<dbReference type="GO" id="GO:0008270">
    <property type="term" value="F:zinc ion binding"/>
    <property type="evidence" value="ECO:0007669"/>
    <property type="project" value="UniProtKB-UniRule"/>
</dbReference>
<dbReference type="GO" id="GO:0006428">
    <property type="term" value="P:isoleucyl-tRNA aminoacylation"/>
    <property type="evidence" value="ECO:0007669"/>
    <property type="project" value="UniProtKB-UniRule"/>
</dbReference>
<dbReference type="CDD" id="cd07960">
    <property type="entry name" value="Anticodon_Ia_Ile_BEm"/>
    <property type="match status" value="1"/>
</dbReference>
<dbReference type="CDD" id="cd00818">
    <property type="entry name" value="IleRS_core"/>
    <property type="match status" value="1"/>
</dbReference>
<dbReference type="FunFam" id="1.10.730.20:FF:000001">
    <property type="entry name" value="Isoleucine--tRNA ligase"/>
    <property type="match status" value="1"/>
</dbReference>
<dbReference type="FunFam" id="3.40.50.620:FF:000042">
    <property type="entry name" value="Isoleucine--tRNA ligase"/>
    <property type="match status" value="1"/>
</dbReference>
<dbReference type="FunFam" id="3.40.50.620:FF:000048">
    <property type="entry name" value="Isoleucine--tRNA ligase"/>
    <property type="match status" value="1"/>
</dbReference>
<dbReference type="FunFam" id="3.90.740.10:FF:000002">
    <property type="entry name" value="Isoleucine--tRNA ligase"/>
    <property type="match status" value="1"/>
</dbReference>
<dbReference type="Gene3D" id="1.10.730.20">
    <property type="match status" value="1"/>
</dbReference>
<dbReference type="Gene3D" id="3.40.50.620">
    <property type="entry name" value="HUPs"/>
    <property type="match status" value="2"/>
</dbReference>
<dbReference type="Gene3D" id="3.90.740.10">
    <property type="entry name" value="Valyl/Leucyl/Isoleucyl-tRNA synthetase, editing domain"/>
    <property type="match status" value="1"/>
</dbReference>
<dbReference type="HAMAP" id="MF_02002">
    <property type="entry name" value="Ile_tRNA_synth_type1"/>
    <property type="match status" value="1"/>
</dbReference>
<dbReference type="InterPro" id="IPR001412">
    <property type="entry name" value="aa-tRNA-synth_I_CS"/>
</dbReference>
<dbReference type="InterPro" id="IPR002300">
    <property type="entry name" value="aa-tRNA-synth_Ia"/>
</dbReference>
<dbReference type="InterPro" id="IPR033708">
    <property type="entry name" value="Anticodon_Ile_BEm"/>
</dbReference>
<dbReference type="InterPro" id="IPR002301">
    <property type="entry name" value="Ile-tRNA-ligase"/>
</dbReference>
<dbReference type="InterPro" id="IPR023585">
    <property type="entry name" value="Ile-tRNA-ligase_type1"/>
</dbReference>
<dbReference type="InterPro" id="IPR050081">
    <property type="entry name" value="Ile-tRNA_ligase"/>
</dbReference>
<dbReference type="InterPro" id="IPR013155">
    <property type="entry name" value="M/V/L/I-tRNA-synth_anticd-bd"/>
</dbReference>
<dbReference type="InterPro" id="IPR014729">
    <property type="entry name" value="Rossmann-like_a/b/a_fold"/>
</dbReference>
<dbReference type="InterPro" id="IPR009080">
    <property type="entry name" value="tRNAsynth_Ia_anticodon-bd"/>
</dbReference>
<dbReference type="InterPro" id="IPR009008">
    <property type="entry name" value="Val/Leu/Ile-tRNA-synth_edit"/>
</dbReference>
<dbReference type="InterPro" id="IPR010663">
    <property type="entry name" value="Znf_FPG/IleRS"/>
</dbReference>
<dbReference type="NCBIfam" id="TIGR00392">
    <property type="entry name" value="ileS"/>
    <property type="match status" value="1"/>
</dbReference>
<dbReference type="PANTHER" id="PTHR42765:SF1">
    <property type="entry name" value="ISOLEUCINE--TRNA LIGASE, MITOCHONDRIAL"/>
    <property type="match status" value="1"/>
</dbReference>
<dbReference type="PANTHER" id="PTHR42765">
    <property type="entry name" value="SOLEUCYL-TRNA SYNTHETASE"/>
    <property type="match status" value="1"/>
</dbReference>
<dbReference type="Pfam" id="PF08264">
    <property type="entry name" value="Anticodon_1"/>
    <property type="match status" value="1"/>
</dbReference>
<dbReference type="Pfam" id="PF00133">
    <property type="entry name" value="tRNA-synt_1"/>
    <property type="match status" value="1"/>
</dbReference>
<dbReference type="Pfam" id="PF06827">
    <property type="entry name" value="zf-FPG_IleRS"/>
    <property type="match status" value="1"/>
</dbReference>
<dbReference type="PRINTS" id="PR00984">
    <property type="entry name" value="TRNASYNTHILE"/>
</dbReference>
<dbReference type="SUPFAM" id="SSF47323">
    <property type="entry name" value="Anticodon-binding domain of a subclass of class I aminoacyl-tRNA synthetases"/>
    <property type="match status" value="1"/>
</dbReference>
<dbReference type="SUPFAM" id="SSF52374">
    <property type="entry name" value="Nucleotidylyl transferase"/>
    <property type="match status" value="1"/>
</dbReference>
<dbReference type="SUPFAM" id="SSF50677">
    <property type="entry name" value="ValRS/IleRS/LeuRS editing domain"/>
    <property type="match status" value="1"/>
</dbReference>
<dbReference type="PROSITE" id="PS00178">
    <property type="entry name" value="AA_TRNA_LIGASE_I"/>
    <property type="match status" value="1"/>
</dbReference>
<proteinExistence type="inferred from homology"/>